<organism>
    <name type="scientific">Legionella pneumophila subsp. pneumophila (strain Philadelphia 1 / ATCC 33152 / DSM 7513)</name>
    <dbReference type="NCBI Taxonomy" id="272624"/>
    <lineage>
        <taxon>Bacteria</taxon>
        <taxon>Pseudomonadati</taxon>
        <taxon>Pseudomonadota</taxon>
        <taxon>Gammaproteobacteria</taxon>
        <taxon>Legionellales</taxon>
        <taxon>Legionellaceae</taxon>
        <taxon>Legionella</taxon>
    </lineage>
</organism>
<comment type="catalytic activity">
    <reaction evidence="1">
        <text>L-histidine = trans-urocanate + NH4(+)</text>
        <dbReference type="Rhea" id="RHEA:21232"/>
        <dbReference type="ChEBI" id="CHEBI:17771"/>
        <dbReference type="ChEBI" id="CHEBI:28938"/>
        <dbReference type="ChEBI" id="CHEBI:57595"/>
        <dbReference type="EC" id="4.3.1.3"/>
    </reaction>
</comment>
<comment type="pathway">
    <text evidence="1">Amino-acid degradation; L-histidine degradation into L-glutamate; N-formimidoyl-L-glutamate from L-histidine: step 1/3.</text>
</comment>
<comment type="subcellular location">
    <subcellularLocation>
        <location evidence="1">Cytoplasm</location>
    </subcellularLocation>
</comment>
<comment type="PTM">
    <text evidence="1">Contains an active site 4-methylidene-imidazol-5-one (MIO), which is formed autocatalytically by cyclization and dehydration of residues Ala-Ser-Gly.</text>
</comment>
<comment type="similarity">
    <text evidence="1">Belongs to the PAL/histidase family.</text>
</comment>
<comment type="sequence caution" evidence="2">
    <conflict type="erroneous initiation">
        <sequence resource="EMBL-CDS" id="AAU27462"/>
    </conflict>
</comment>
<reference key="1">
    <citation type="journal article" date="2004" name="Science">
        <title>The genomic sequence of the accidental pathogen Legionella pneumophila.</title>
        <authorList>
            <person name="Chien M."/>
            <person name="Morozova I."/>
            <person name="Shi S."/>
            <person name="Sheng H."/>
            <person name="Chen J."/>
            <person name="Gomez S.M."/>
            <person name="Asamani G."/>
            <person name="Hill K."/>
            <person name="Nuara J."/>
            <person name="Feder M."/>
            <person name="Rineer J."/>
            <person name="Greenberg J.J."/>
            <person name="Steshenko V."/>
            <person name="Park S.H."/>
            <person name="Zhao B."/>
            <person name="Teplitskaya E."/>
            <person name="Edwards J.R."/>
            <person name="Pampou S."/>
            <person name="Georghiou A."/>
            <person name="Chou I.-C."/>
            <person name="Iannuccilli W."/>
            <person name="Ulz M.E."/>
            <person name="Kim D.H."/>
            <person name="Geringer-Sameth A."/>
            <person name="Goldsberry C."/>
            <person name="Morozov P."/>
            <person name="Fischer S.G."/>
            <person name="Segal G."/>
            <person name="Qu X."/>
            <person name="Rzhetsky A."/>
            <person name="Zhang P."/>
            <person name="Cayanis E."/>
            <person name="De Jong P.J."/>
            <person name="Ju J."/>
            <person name="Kalachikov S."/>
            <person name="Shuman H.A."/>
            <person name="Russo J.J."/>
        </authorList>
    </citation>
    <scope>NUCLEOTIDE SEQUENCE [LARGE SCALE GENOMIC DNA]</scope>
    <source>
        <strain>Philadelphia 1 / ATCC 33152 / DSM 7513</strain>
    </source>
</reference>
<feature type="chain" id="PRO_0000161011" description="Histidine ammonia-lyase">
    <location>
        <begin position="1"/>
        <end position="506"/>
    </location>
</feature>
<feature type="modified residue" description="2,3-didehydroalanine (Ser)" evidence="1">
    <location>
        <position position="145"/>
    </location>
</feature>
<feature type="cross-link" description="5-imidazolinone (Ala-Gly)" evidence="1">
    <location>
        <begin position="144"/>
        <end position="146"/>
    </location>
</feature>
<keyword id="KW-0963">Cytoplasm</keyword>
<keyword id="KW-0369">Histidine metabolism</keyword>
<keyword id="KW-0456">Lyase</keyword>
<keyword id="KW-1185">Reference proteome</keyword>
<dbReference type="EC" id="4.3.1.3" evidence="1"/>
<dbReference type="EMBL" id="AE017354">
    <property type="protein sequence ID" value="AAU27462.1"/>
    <property type="status" value="ALT_INIT"/>
    <property type="molecule type" value="Genomic_DNA"/>
</dbReference>
<dbReference type="RefSeq" id="WP_015444533.1">
    <property type="nucleotide sequence ID" value="NC_002942.5"/>
</dbReference>
<dbReference type="RefSeq" id="YP_095409.1">
    <property type="nucleotide sequence ID" value="NC_002942.5"/>
</dbReference>
<dbReference type="SMR" id="Q5ZVR0"/>
<dbReference type="STRING" id="272624.lpg1380"/>
<dbReference type="PaxDb" id="272624-lpg1380"/>
<dbReference type="GeneID" id="57035370"/>
<dbReference type="KEGG" id="lpn:lpg1380"/>
<dbReference type="PATRIC" id="fig|272624.6.peg.1450"/>
<dbReference type="eggNOG" id="COG2986">
    <property type="taxonomic scope" value="Bacteria"/>
</dbReference>
<dbReference type="HOGENOM" id="CLU_014801_4_0_6"/>
<dbReference type="OrthoDB" id="9806955at2"/>
<dbReference type="UniPathway" id="UPA00379">
    <property type="reaction ID" value="UER00549"/>
</dbReference>
<dbReference type="Proteomes" id="UP000000609">
    <property type="component" value="Chromosome"/>
</dbReference>
<dbReference type="GO" id="GO:0005737">
    <property type="term" value="C:cytoplasm"/>
    <property type="evidence" value="ECO:0007669"/>
    <property type="project" value="UniProtKB-SubCell"/>
</dbReference>
<dbReference type="GO" id="GO:0004397">
    <property type="term" value="F:histidine ammonia-lyase activity"/>
    <property type="evidence" value="ECO:0007669"/>
    <property type="project" value="UniProtKB-UniRule"/>
</dbReference>
<dbReference type="GO" id="GO:0019556">
    <property type="term" value="P:L-histidine catabolic process to glutamate and formamide"/>
    <property type="evidence" value="ECO:0007669"/>
    <property type="project" value="UniProtKB-UniPathway"/>
</dbReference>
<dbReference type="GO" id="GO:0019557">
    <property type="term" value="P:L-histidine catabolic process to glutamate and formate"/>
    <property type="evidence" value="ECO:0007669"/>
    <property type="project" value="UniProtKB-UniPathway"/>
</dbReference>
<dbReference type="CDD" id="cd00332">
    <property type="entry name" value="PAL-HAL"/>
    <property type="match status" value="1"/>
</dbReference>
<dbReference type="FunFam" id="1.10.275.10:FF:000005">
    <property type="entry name" value="Histidine ammonia-lyase"/>
    <property type="match status" value="1"/>
</dbReference>
<dbReference type="FunFam" id="1.20.200.10:FF:000003">
    <property type="entry name" value="Histidine ammonia-lyase"/>
    <property type="match status" value="1"/>
</dbReference>
<dbReference type="Gene3D" id="1.20.200.10">
    <property type="entry name" value="Fumarase/aspartase (Central domain)"/>
    <property type="match status" value="1"/>
</dbReference>
<dbReference type="Gene3D" id="1.10.275.10">
    <property type="entry name" value="Fumarase/aspartase (N-terminal domain)"/>
    <property type="match status" value="1"/>
</dbReference>
<dbReference type="HAMAP" id="MF_00229">
    <property type="entry name" value="His_ammonia_lyase"/>
    <property type="match status" value="1"/>
</dbReference>
<dbReference type="InterPro" id="IPR001106">
    <property type="entry name" value="Aromatic_Lyase"/>
</dbReference>
<dbReference type="InterPro" id="IPR024083">
    <property type="entry name" value="Fumarase/histidase_N"/>
</dbReference>
<dbReference type="InterPro" id="IPR005921">
    <property type="entry name" value="HutH"/>
</dbReference>
<dbReference type="InterPro" id="IPR008948">
    <property type="entry name" value="L-Aspartase-like"/>
</dbReference>
<dbReference type="InterPro" id="IPR022313">
    <property type="entry name" value="Phe/His_NH3-lyase_AS"/>
</dbReference>
<dbReference type="NCBIfam" id="TIGR01225">
    <property type="entry name" value="hutH"/>
    <property type="match status" value="1"/>
</dbReference>
<dbReference type="NCBIfam" id="NF006871">
    <property type="entry name" value="PRK09367.1"/>
    <property type="match status" value="1"/>
</dbReference>
<dbReference type="PANTHER" id="PTHR10362">
    <property type="entry name" value="HISTIDINE AMMONIA-LYASE"/>
    <property type="match status" value="1"/>
</dbReference>
<dbReference type="Pfam" id="PF00221">
    <property type="entry name" value="Lyase_aromatic"/>
    <property type="match status" value="1"/>
</dbReference>
<dbReference type="SUPFAM" id="SSF48557">
    <property type="entry name" value="L-aspartase-like"/>
    <property type="match status" value="1"/>
</dbReference>
<dbReference type="PROSITE" id="PS00488">
    <property type="entry name" value="PAL_HISTIDASE"/>
    <property type="match status" value="1"/>
</dbReference>
<gene>
    <name evidence="1" type="primary">hutH</name>
    <name type="ordered locus">lpg1380</name>
</gene>
<protein>
    <recommendedName>
        <fullName evidence="1">Histidine ammonia-lyase</fullName>
        <shortName evidence="1">Histidase</shortName>
        <ecNumber evidence="1">4.3.1.3</ecNumber>
    </recommendedName>
</protein>
<name>HUTH_LEGPH</name>
<sequence length="506" mass="54720">MSEQFILQPGQLSLLSIKQILDEELSCVLAENSFELIRASHQTVKKVIDEKKTVYGINTGFGSLANQTISSDCLKELQRNIVLSHACGTGKLLPDDVVALILLLKINNLSQGYSGVRLELINALIALFNHKVYPCIPSKGSVGASGDLVPLAHLSLPLLGEGEVRHQGQVISAEEGLKLAGLKPLELEAKEGLALLNGLQVSTALALSALFISETLFETAIISGSLSVDAASGSDVPFDDRIHQIRGHQAQISAASMYRNLLAGSQIRESHRHCNRVQDPYSLRCQPQIMGAILHQMQFVGQTLQVEANAISDNPLVFAEQGDILSGGNFHGEIIAMAADNLALALSEIGGSAERRIALLIDKNFSGLPAFLVRESGLNSGFMIAHVTAASCASDNKALAHPHSVDSLPTSANQEDHVSMATSAARRLHEMIDNTSTILAIELLAACQGLEFHKPLKTSPQLDKIYQSVRSVVKEYDKDRYFAPDIEKIKKKILDKEFSLLTLTNE</sequence>
<evidence type="ECO:0000255" key="1">
    <source>
        <dbReference type="HAMAP-Rule" id="MF_00229"/>
    </source>
</evidence>
<evidence type="ECO:0000305" key="2"/>
<accession>Q5ZVR0</accession>
<proteinExistence type="inferred from homology"/>